<dbReference type="EMBL" id="CP001144">
    <property type="protein sequence ID" value="ACH77861.1"/>
    <property type="molecule type" value="Genomic_DNA"/>
</dbReference>
<dbReference type="RefSeq" id="WP_000858228.1">
    <property type="nucleotide sequence ID" value="NC_011205.1"/>
</dbReference>
<dbReference type="SMR" id="B5FKN5"/>
<dbReference type="KEGG" id="sed:SeD_A3990"/>
<dbReference type="HOGENOM" id="CLU_019375_7_0_6"/>
<dbReference type="Proteomes" id="UP000008322">
    <property type="component" value="Chromosome"/>
</dbReference>
<dbReference type="GO" id="GO:0005886">
    <property type="term" value="C:plasma membrane"/>
    <property type="evidence" value="ECO:0007669"/>
    <property type="project" value="UniProtKB-SubCell"/>
</dbReference>
<dbReference type="GO" id="GO:0015138">
    <property type="term" value="F:fumarate transmembrane transporter activity"/>
    <property type="evidence" value="ECO:0007669"/>
    <property type="project" value="TreeGrafter"/>
</dbReference>
<dbReference type="GO" id="GO:0015366">
    <property type="term" value="F:malate:proton symporter activity"/>
    <property type="evidence" value="ECO:0007669"/>
    <property type="project" value="TreeGrafter"/>
</dbReference>
<dbReference type="GO" id="GO:0015141">
    <property type="term" value="F:succinate transmembrane transporter activity"/>
    <property type="evidence" value="ECO:0007669"/>
    <property type="project" value="TreeGrafter"/>
</dbReference>
<dbReference type="GO" id="GO:0070778">
    <property type="term" value="P:L-aspartate transmembrane transport"/>
    <property type="evidence" value="ECO:0007669"/>
    <property type="project" value="TreeGrafter"/>
</dbReference>
<dbReference type="FunFam" id="1.10.3860.10:FF:000001">
    <property type="entry name" value="C4-dicarboxylate transport protein"/>
    <property type="match status" value="1"/>
</dbReference>
<dbReference type="Gene3D" id="1.10.3860.10">
    <property type="entry name" value="Sodium:dicarboxylate symporter"/>
    <property type="match status" value="1"/>
</dbReference>
<dbReference type="HAMAP" id="MF_01300">
    <property type="entry name" value="C4_dicarb_transport"/>
    <property type="match status" value="1"/>
</dbReference>
<dbReference type="InterPro" id="IPR023954">
    <property type="entry name" value="C4_dicarb_transport"/>
</dbReference>
<dbReference type="InterPro" id="IPR001991">
    <property type="entry name" value="Na-dicarboxylate_symporter"/>
</dbReference>
<dbReference type="InterPro" id="IPR018107">
    <property type="entry name" value="Na-dicarboxylate_symporter_CS"/>
</dbReference>
<dbReference type="InterPro" id="IPR036458">
    <property type="entry name" value="Na:dicarbo_symporter_sf"/>
</dbReference>
<dbReference type="NCBIfam" id="NF002461">
    <property type="entry name" value="PRK01663.1"/>
    <property type="match status" value="1"/>
</dbReference>
<dbReference type="NCBIfam" id="NF009587">
    <property type="entry name" value="PRK13027.1"/>
    <property type="match status" value="1"/>
</dbReference>
<dbReference type="PANTHER" id="PTHR42865:SF1">
    <property type="entry name" value="AEROBIC C4-DICARBOXYLATE TRANSPORT PROTEIN"/>
    <property type="match status" value="1"/>
</dbReference>
<dbReference type="PANTHER" id="PTHR42865">
    <property type="entry name" value="PROTON/GLUTAMATE-ASPARTATE SYMPORTER"/>
    <property type="match status" value="1"/>
</dbReference>
<dbReference type="Pfam" id="PF00375">
    <property type="entry name" value="SDF"/>
    <property type="match status" value="1"/>
</dbReference>
<dbReference type="PRINTS" id="PR00173">
    <property type="entry name" value="EDTRNSPORT"/>
</dbReference>
<dbReference type="SUPFAM" id="SSF118215">
    <property type="entry name" value="Proton glutamate symport protein"/>
    <property type="match status" value="1"/>
</dbReference>
<dbReference type="PROSITE" id="PS00713">
    <property type="entry name" value="NA_DICARBOXYL_SYMP_1"/>
    <property type="match status" value="1"/>
</dbReference>
<dbReference type="PROSITE" id="PS00714">
    <property type="entry name" value="NA_DICARBOXYL_SYMP_2"/>
    <property type="match status" value="1"/>
</dbReference>
<protein>
    <recommendedName>
        <fullName evidence="1">C4-dicarboxylate transport protein</fullName>
    </recommendedName>
</protein>
<reference key="1">
    <citation type="journal article" date="2011" name="J. Bacteriol.">
        <title>Comparative genomics of 28 Salmonella enterica isolates: evidence for CRISPR-mediated adaptive sublineage evolution.</title>
        <authorList>
            <person name="Fricke W.F."/>
            <person name="Mammel M.K."/>
            <person name="McDermott P.F."/>
            <person name="Tartera C."/>
            <person name="White D.G."/>
            <person name="Leclerc J.E."/>
            <person name="Ravel J."/>
            <person name="Cebula T.A."/>
        </authorList>
    </citation>
    <scope>NUCLEOTIDE SEQUENCE [LARGE SCALE GENOMIC DNA]</scope>
    <source>
        <strain>CT_02021853</strain>
    </source>
</reference>
<gene>
    <name evidence="1" type="primary">dctA</name>
    <name type="ordered locus">SeD_A3990</name>
</gene>
<evidence type="ECO:0000255" key="1">
    <source>
        <dbReference type="HAMAP-Rule" id="MF_01300"/>
    </source>
</evidence>
<organism>
    <name type="scientific">Salmonella dublin (strain CT_02021853)</name>
    <dbReference type="NCBI Taxonomy" id="439851"/>
    <lineage>
        <taxon>Bacteria</taxon>
        <taxon>Pseudomonadati</taxon>
        <taxon>Pseudomonadota</taxon>
        <taxon>Gammaproteobacteria</taxon>
        <taxon>Enterobacterales</taxon>
        <taxon>Enterobacteriaceae</taxon>
        <taxon>Salmonella</taxon>
    </lineage>
</organism>
<sequence>MKTSLFKSLYFQVLTAIAIGILLGHYYPELGAQMKPLGDAFVKLIKMIIAPVIFCTVVTGIAGMESMKAVGRTGAVALLYFEIVSTIALIIGLIIVNVVQPGAGMNVDPATLDAQAVAVYAAQAKEQGIIAFLMDVIPGSVIGAFASGNILQVLLFAVLFGFALHRLGSKGQLIFNVIESFSQVIFGIINMIMRLAPIGAFGAMAFTIGKYGVGSLVQLGQLIICFYITCILFVVVVLGTIARVTGFSIFKFIRYIREELLIVLGTSSSESALPRMLDKMEKLGCRKSVVGLVIPTGYSFNLDGTSIYLTMAAVFIAQATNSHMDIFHQITLLVVLLLSSKGAAGVTGSGFIVLAATISAVGHLPVAGLALILGIDRFMSEARALTNLVGNGVATVVVAKWVKELDHQKLDDVLNNRAPDGKTHEISS</sequence>
<comment type="function">
    <text evidence="1">Responsible for the transport of dicarboxylates such as succinate, fumarate, and malate from the periplasm across the membrane.</text>
</comment>
<comment type="subcellular location">
    <subcellularLocation>
        <location evidence="1">Cell inner membrane</location>
        <topology evidence="1">Multi-pass membrane protein</topology>
    </subcellularLocation>
</comment>
<comment type="similarity">
    <text evidence="1">Belongs to the dicarboxylate/amino acid:cation symporter (DAACS) (TC 2.A.23) family.</text>
</comment>
<accession>B5FKN5</accession>
<keyword id="KW-0997">Cell inner membrane</keyword>
<keyword id="KW-1003">Cell membrane</keyword>
<keyword id="KW-0472">Membrane</keyword>
<keyword id="KW-0769">Symport</keyword>
<keyword id="KW-0812">Transmembrane</keyword>
<keyword id="KW-1133">Transmembrane helix</keyword>
<keyword id="KW-0813">Transport</keyword>
<feature type="chain" id="PRO_1000140464" description="C4-dicarboxylate transport protein">
    <location>
        <begin position="1"/>
        <end position="428"/>
    </location>
</feature>
<feature type="transmembrane region" description="Helical" evidence="1">
    <location>
        <begin position="4"/>
        <end position="24"/>
    </location>
</feature>
<feature type="transmembrane region" description="Helical" evidence="1">
    <location>
        <begin position="44"/>
        <end position="64"/>
    </location>
</feature>
<feature type="transmembrane region" description="Helical" evidence="1">
    <location>
        <begin position="76"/>
        <end position="96"/>
    </location>
</feature>
<feature type="transmembrane region" description="Helical" evidence="1">
    <location>
        <begin position="142"/>
        <end position="162"/>
    </location>
</feature>
<feature type="transmembrane region" description="Helical" evidence="1">
    <location>
        <begin position="184"/>
        <end position="204"/>
    </location>
</feature>
<feature type="transmembrane region" description="Helical" evidence="1">
    <location>
        <begin position="222"/>
        <end position="242"/>
    </location>
</feature>
<feature type="transmembrane region" description="Helical" evidence="1">
    <location>
        <begin position="289"/>
        <end position="309"/>
    </location>
</feature>
<feature type="transmembrane region" description="Helical" evidence="1">
    <location>
        <begin position="326"/>
        <end position="346"/>
    </location>
</feature>
<feature type="transmembrane region" description="Helical" evidence="1">
    <location>
        <begin position="352"/>
        <end position="372"/>
    </location>
</feature>
<proteinExistence type="inferred from homology"/>
<name>DCTA_SALDC</name>